<proteinExistence type="inferred from homology"/>
<comment type="function">
    <text evidence="1">Involved in pre-25S rRNA processing.</text>
</comment>
<comment type="subcellular location">
    <subcellularLocation>
        <location evidence="1">Nucleus</location>
        <location evidence="1">Nucleolus</location>
    </subcellularLocation>
</comment>
<comment type="similarity">
    <text evidence="5">Belongs to the RRM RBM34 family.</text>
</comment>
<gene>
    <name type="primary">nop12</name>
    <name type="ORF">AFUA_8G04400</name>
</gene>
<reference key="1">
    <citation type="journal article" date="2005" name="Nature">
        <title>Genomic sequence of the pathogenic and allergenic filamentous fungus Aspergillus fumigatus.</title>
        <authorList>
            <person name="Nierman W.C."/>
            <person name="Pain A."/>
            <person name="Anderson M.J."/>
            <person name="Wortman J.R."/>
            <person name="Kim H.S."/>
            <person name="Arroyo J."/>
            <person name="Berriman M."/>
            <person name="Abe K."/>
            <person name="Archer D.B."/>
            <person name="Bermejo C."/>
            <person name="Bennett J.W."/>
            <person name="Bowyer P."/>
            <person name="Chen D."/>
            <person name="Collins M."/>
            <person name="Coulsen R."/>
            <person name="Davies R."/>
            <person name="Dyer P.S."/>
            <person name="Farman M.L."/>
            <person name="Fedorova N."/>
            <person name="Fedorova N.D."/>
            <person name="Feldblyum T.V."/>
            <person name="Fischer R."/>
            <person name="Fosker N."/>
            <person name="Fraser A."/>
            <person name="Garcia J.L."/>
            <person name="Garcia M.J."/>
            <person name="Goble A."/>
            <person name="Goldman G.H."/>
            <person name="Gomi K."/>
            <person name="Griffith-Jones S."/>
            <person name="Gwilliam R."/>
            <person name="Haas B.J."/>
            <person name="Haas H."/>
            <person name="Harris D.E."/>
            <person name="Horiuchi H."/>
            <person name="Huang J."/>
            <person name="Humphray S."/>
            <person name="Jimenez J."/>
            <person name="Keller N."/>
            <person name="Khouri H."/>
            <person name="Kitamoto K."/>
            <person name="Kobayashi T."/>
            <person name="Konzack S."/>
            <person name="Kulkarni R."/>
            <person name="Kumagai T."/>
            <person name="Lafton A."/>
            <person name="Latge J.-P."/>
            <person name="Li W."/>
            <person name="Lord A."/>
            <person name="Lu C."/>
            <person name="Majoros W.H."/>
            <person name="May G.S."/>
            <person name="Miller B.L."/>
            <person name="Mohamoud Y."/>
            <person name="Molina M."/>
            <person name="Monod M."/>
            <person name="Mouyna I."/>
            <person name="Mulligan S."/>
            <person name="Murphy L.D."/>
            <person name="O'Neil S."/>
            <person name="Paulsen I."/>
            <person name="Penalva M.A."/>
            <person name="Pertea M."/>
            <person name="Price C."/>
            <person name="Pritchard B.L."/>
            <person name="Quail M.A."/>
            <person name="Rabbinowitsch E."/>
            <person name="Rawlins N."/>
            <person name="Rajandream M.A."/>
            <person name="Reichard U."/>
            <person name="Renauld H."/>
            <person name="Robson G.D."/>
            <person name="Rodriguez de Cordoba S."/>
            <person name="Rodriguez-Pena J.M."/>
            <person name="Ronning C.M."/>
            <person name="Rutter S."/>
            <person name="Salzberg S.L."/>
            <person name="Sanchez M."/>
            <person name="Sanchez-Ferrero J.C."/>
            <person name="Saunders D."/>
            <person name="Seeger K."/>
            <person name="Squares R."/>
            <person name="Squares S."/>
            <person name="Takeuchi M."/>
            <person name="Tekaia F."/>
            <person name="Turner G."/>
            <person name="Vazquez de Aldana C.R."/>
            <person name="Weidman J."/>
            <person name="White O."/>
            <person name="Woodward J.R."/>
            <person name="Yu J.-H."/>
            <person name="Fraser C.M."/>
            <person name="Galagan J.E."/>
            <person name="Asai K."/>
            <person name="Machida M."/>
            <person name="Hall N."/>
            <person name="Barrell B.G."/>
            <person name="Denning D.W."/>
        </authorList>
    </citation>
    <scope>NUCLEOTIDE SEQUENCE [LARGE SCALE GENOMIC DNA]</scope>
    <source>
        <strain>ATCC MYA-4609 / CBS 101355 / FGSC A1100 / Af293</strain>
    </source>
</reference>
<dbReference type="EMBL" id="AAHF01000013">
    <property type="protein sequence ID" value="EAL85209.1"/>
    <property type="molecule type" value="Genomic_DNA"/>
</dbReference>
<dbReference type="RefSeq" id="XP_747247.1">
    <property type="nucleotide sequence ID" value="XM_742154.1"/>
</dbReference>
<dbReference type="SMR" id="Q4WCH5"/>
<dbReference type="FunCoup" id="Q4WCH5">
    <property type="interactions" value="767"/>
</dbReference>
<dbReference type="STRING" id="330879.Q4WCH5"/>
<dbReference type="EnsemblFungi" id="EAL85209">
    <property type="protein sequence ID" value="EAL85209"/>
    <property type="gene ID" value="AFUA_8G04400"/>
</dbReference>
<dbReference type="GeneID" id="3504782"/>
<dbReference type="KEGG" id="afm:AFUA_8G04400"/>
<dbReference type="VEuPathDB" id="FungiDB:Afu8g04400"/>
<dbReference type="eggNOG" id="KOG0118">
    <property type="taxonomic scope" value="Eukaryota"/>
</dbReference>
<dbReference type="HOGENOM" id="CLU_006468_2_0_1"/>
<dbReference type="InParanoid" id="Q4WCH5"/>
<dbReference type="OMA" id="NAYAVYT"/>
<dbReference type="OrthoDB" id="442677at2759"/>
<dbReference type="Proteomes" id="UP000002530">
    <property type="component" value="Chromosome 8"/>
</dbReference>
<dbReference type="GO" id="GO:0005730">
    <property type="term" value="C:nucleolus"/>
    <property type="evidence" value="ECO:0000318"/>
    <property type="project" value="GO_Central"/>
</dbReference>
<dbReference type="GO" id="GO:0003723">
    <property type="term" value="F:RNA binding"/>
    <property type="evidence" value="ECO:0000318"/>
    <property type="project" value="GO_Central"/>
</dbReference>
<dbReference type="GO" id="GO:0000463">
    <property type="term" value="P:maturation of LSU-rRNA from tricistronic rRNA transcript (SSU-rRNA, 5.8S rRNA, LSU-rRNA)"/>
    <property type="evidence" value="ECO:0000318"/>
    <property type="project" value="GO_Central"/>
</dbReference>
<dbReference type="Gene3D" id="3.30.70.330">
    <property type="match status" value="2"/>
</dbReference>
<dbReference type="InterPro" id="IPR012677">
    <property type="entry name" value="Nucleotide-bd_a/b_plait_sf"/>
</dbReference>
<dbReference type="InterPro" id="IPR035979">
    <property type="entry name" value="RBD_domain_sf"/>
</dbReference>
<dbReference type="InterPro" id="IPR000504">
    <property type="entry name" value="RRM_dom"/>
</dbReference>
<dbReference type="PANTHER" id="PTHR23236">
    <property type="entry name" value="EUKARYOTIC TRANSLATION INITIATION FACTOR 4B/4H"/>
    <property type="match status" value="1"/>
</dbReference>
<dbReference type="PANTHER" id="PTHR23236:SF25">
    <property type="entry name" value="RNA-BINDING PROTEIN 34"/>
    <property type="match status" value="1"/>
</dbReference>
<dbReference type="Pfam" id="PF00076">
    <property type="entry name" value="RRM_1"/>
    <property type="match status" value="1"/>
</dbReference>
<dbReference type="SMART" id="SM00360">
    <property type="entry name" value="RRM"/>
    <property type="match status" value="2"/>
</dbReference>
<dbReference type="SUPFAM" id="SSF54928">
    <property type="entry name" value="RNA-binding domain, RBD"/>
    <property type="match status" value="2"/>
</dbReference>
<dbReference type="PROSITE" id="PS50102">
    <property type="entry name" value="RRM"/>
    <property type="match status" value="1"/>
</dbReference>
<evidence type="ECO:0000250" key="1"/>
<evidence type="ECO:0000255" key="2"/>
<evidence type="ECO:0000255" key="3">
    <source>
        <dbReference type="PROSITE-ProRule" id="PRU00176"/>
    </source>
</evidence>
<evidence type="ECO:0000256" key="4">
    <source>
        <dbReference type="SAM" id="MobiDB-lite"/>
    </source>
</evidence>
<evidence type="ECO:0000305" key="5"/>
<keyword id="KW-0175">Coiled coil</keyword>
<keyword id="KW-0539">Nucleus</keyword>
<keyword id="KW-1185">Reference proteome</keyword>
<keyword id="KW-0677">Repeat</keyword>
<keyword id="KW-0690">Ribosome biogenesis</keyword>
<keyword id="KW-0694">RNA-binding</keyword>
<keyword id="KW-0698">rRNA processing</keyword>
<sequence length="538" mass="58986">MGKKSKAQSDNVSQPGKTDVTLPFLGGKAAIDPTVASLFEKSAGPVKAPSVQPIITQRKENGPEDDVEKEEDDEEISELEEDLQSEDEDMQDVSEVAGDAERTLAVDTQAPSSKKRKRAPAEDLEETYMRRIAKEEQKEQEKRRAEKAKRQKVEEGGKDSDPVSDKSKDGRDESSEEEDEITVPRHETQSGDPESKELEKSNRTVFLGNVSSQAIKSKSAKKTLLKHLASFLSTLPESTGPHKVESIRFRSVAFASGGKVPKRAAFARREILDDTTPSTNAYVVYSTVQAARKAPAALNGTVVLDRHLRVDSVAHPSQIDHKRCVFVGNLDFVDNETDPEEDDKKKKKKKSGPADVEEGLWRTFNAHTKGSKERASTRGNVESVRVVRDRTTRVGKGFAYVQFYDQVCVEEALLLDGKKFPPMLPRKLRVTRAKKLPKKRDGPETGSHGKALGEGFSTLQGRAGKLFGRAGAAKMKAEGRKSISGNSVVFEGNRASEGSSRIKIKTKSRGSKGKPKNRSAKRAAAYQAAGGRKGKMAK</sequence>
<name>NOP12_ASPFU</name>
<protein>
    <recommendedName>
        <fullName>Nucleolar protein 12</fullName>
    </recommendedName>
</protein>
<feature type="chain" id="PRO_0000081665" description="Nucleolar protein 12">
    <location>
        <begin position="1"/>
        <end position="538"/>
    </location>
</feature>
<feature type="domain" description="RRM 1" evidence="3">
    <location>
        <begin position="203"/>
        <end position="315"/>
    </location>
</feature>
<feature type="domain" description="RRM 2" evidence="3">
    <location>
        <begin position="323"/>
        <end position="435"/>
    </location>
</feature>
<feature type="region of interest" description="Disordered" evidence="4">
    <location>
        <begin position="1"/>
        <end position="25"/>
    </location>
</feature>
<feature type="region of interest" description="Disordered" evidence="4">
    <location>
        <begin position="41"/>
        <end position="203"/>
    </location>
</feature>
<feature type="region of interest" description="Disordered" evidence="4">
    <location>
        <begin position="336"/>
        <end position="378"/>
    </location>
</feature>
<feature type="region of interest" description="Disordered" evidence="4">
    <location>
        <begin position="433"/>
        <end position="455"/>
    </location>
</feature>
<feature type="region of interest" description="Disordered" evidence="4">
    <location>
        <begin position="476"/>
        <end position="538"/>
    </location>
</feature>
<feature type="coiled-coil region" evidence="2">
    <location>
        <begin position="64"/>
        <end position="156"/>
    </location>
</feature>
<feature type="compositionally biased region" description="Acidic residues" evidence="4">
    <location>
        <begin position="63"/>
        <end position="92"/>
    </location>
</feature>
<feature type="compositionally biased region" description="Basic and acidic residues" evidence="4">
    <location>
        <begin position="127"/>
        <end position="144"/>
    </location>
</feature>
<feature type="compositionally biased region" description="Basic and acidic residues" evidence="4">
    <location>
        <begin position="151"/>
        <end position="173"/>
    </location>
</feature>
<feature type="compositionally biased region" description="Basic and acidic residues" evidence="4">
    <location>
        <begin position="182"/>
        <end position="202"/>
    </location>
</feature>
<feature type="compositionally biased region" description="Basic residues" evidence="4">
    <location>
        <begin position="502"/>
        <end position="521"/>
    </location>
</feature>
<organism>
    <name type="scientific">Aspergillus fumigatus (strain ATCC MYA-4609 / CBS 101355 / FGSC A1100 / Af293)</name>
    <name type="common">Neosartorya fumigata</name>
    <dbReference type="NCBI Taxonomy" id="330879"/>
    <lineage>
        <taxon>Eukaryota</taxon>
        <taxon>Fungi</taxon>
        <taxon>Dikarya</taxon>
        <taxon>Ascomycota</taxon>
        <taxon>Pezizomycotina</taxon>
        <taxon>Eurotiomycetes</taxon>
        <taxon>Eurotiomycetidae</taxon>
        <taxon>Eurotiales</taxon>
        <taxon>Aspergillaceae</taxon>
        <taxon>Aspergillus</taxon>
        <taxon>Aspergillus subgen. Fumigati</taxon>
    </lineage>
</organism>
<accession>Q4WCH5</accession>